<keyword id="KW-0067">ATP-binding</keyword>
<keyword id="KW-0378">Hydrolase</keyword>
<keyword id="KW-0547">Nucleotide-binding</keyword>
<keyword id="KW-1185">Reference proteome</keyword>
<comment type="function">
    <text evidence="1">Catalyzes the cleavage of 5-oxoproline to form L-glutamate coupled to the hydrolysis of ATP to ADP and inorganic phosphate.</text>
</comment>
<comment type="catalytic activity">
    <reaction evidence="1">
        <text>5-oxo-L-proline + ATP + 2 H2O = L-glutamate + ADP + phosphate + H(+)</text>
        <dbReference type="Rhea" id="RHEA:10348"/>
        <dbReference type="ChEBI" id="CHEBI:15377"/>
        <dbReference type="ChEBI" id="CHEBI:15378"/>
        <dbReference type="ChEBI" id="CHEBI:29985"/>
        <dbReference type="ChEBI" id="CHEBI:30616"/>
        <dbReference type="ChEBI" id="CHEBI:43474"/>
        <dbReference type="ChEBI" id="CHEBI:58402"/>
        <dbReference type="ChEBI" id="CHEBI:456216"/>
        <dbReference type="EC" id="3.5.2.9"/>
    </reaction>
</comment>
<comment type="subunit">
    <text evidence="1">Forms a complex composed of PxpA, PxpB and PxpC.</text>
</comment>
<comment type="similarity">
    <text evidence="1">Belongs to the LamB/PxpA family.</text>
</comment>
<comment type="sequence caution" evidence="2">
    <conflict type="frameshift">
        <sequence resource="EMBL" id="BX640411"/>
    </conflict>
    <text>The sequence has been verified by the authors and is believed to be correct.</text>
</comment>
<sequence>MNPAIDLNCDMGESYGAWRMGNDEAVLQFVTSANIACGFHGGDPSTMRQTVAAALAHGVALGAHPSLPDLAGFGRRAMQITPQEAYDLVVYQVGALAGVAASQGARLHHVKAHGALYNMAAKDAALARAICQAVRDVDSDLVLYGLAGSALIDAARAIGLRAAQEVFADRTYQADGQLTPRSQPDAMITDLDQAIAQVLGMVRDGSVRTPDGQTVALQADTLCIHGDQPDALVFARGIRLALERDGIAIQAA</sequence>
<name>PXPA_BORPE</name>
<protein>
    <recommendedName>
        <fullName evidence="1">5-oxoprolinase subunit A</fullName>
        <shortName evidence="1">5-OPase subunit A</shortName>
        <ecNumber evidence="1">3.5.2.9</ecNumber>
    </recommendedName>
    <alternativeName>
        <fullName evidence="1">5-oxoprolinase (ATP-hydrolyzing) subunit A</fullName>
    </alternativeName>
</protein>
<gene>
    <name evidence="1" type="primary">pxpA</name>
    <name type="ordered locus">BP0150</name>
</gene>
<proteinExistence type="inferred from homology"/>
<dbReference type="EC" id="3.5.2.9" evidence="1"/>
<dbReference type="EMBL" id="AF006000">
    <property type="protein sequence ID" value="AAC46263.1"/>
    <property type="molecule type" value="Genomic_DNA"/>
</dbReference>
<dbReference type="EMBL" id="BX640411">
    <property type="status" value="NOT_ANNOTATED_CDS"/>
    <property type="molecule type" value="Genomic_DNA"/>
</dbReference>
<dbReference type="SMR" id="O30444"/>
<dbReference type="Proteomes" id="UP000002676">
    <property type="component" value="Chromosome"/>
</dbReference>
<dbReference type="GO" id="GO:0017168">
    <property type="term" value="F:5-oxoprolinase (ATP-hydrolyzing) activity"/>
    <property type="evidence" value="ECO:0007669"/>
    <property type="project" value="UniProtKB-UniRule"/>
</dbReference>
<dbReference type="GO" id="GO:0005524">
    <property type="term" value="F:ATP binding"/>
    <property type="evidence" value="ECO:0007669"/>
    <property type="project" value="UniProtKB-UniRule"/>
</dbReference>
<dbReference type="GO" id="GO:0005975">
    <property type="term" value="P:carbohydrate metabolic process"/>
    <property type="evidence" value="ECO:0007669"/>
    <property type="project" value="InterPro"/>
</dbReference>
<dbReference type="CDD" id="cd10787">
    <property type="entry name" value="LamB_YcsF_like"/>
    <property type="match status" value="1"/>
</dbReference>
<dbReference type="Gene3D" id="3.20.20.370">
    <property type="entry name" value="Glycoside hydrolase/deacetylase"/>
    <property type="match status" value="1"/>
</dbReference>
<dbReference type="HAMAP" id="MF_00691">
    <property type="entry name" value="PxpA"/>
    <property type="match status" value="1"/>
</dbReference>
<dbReference type="InterPro" id="IPR011330">
    <property type="entry name" value="Glyco_hydro/deAcase_b/a-brl"/>
</dbReference>
<dbReference type="InterPro" id="IPR005501">
    <property type="entry name" value="LamB/YcsF/PxpA-like"/>
</dbReference>
<dbReference type="NCBIfam" id="NF003814">
    <property type="entry name" value="PRK05406.1-3"/>
    <property type="match status" value="1"/>
</dbReference>
<dbReference type="NCBIfam" id="NF003816">
    <property type="entry name" value="PRK05406.1-5"/>
    <property type="match status" value="1"/>
</dbReference>
<dbReference type="PANTHER" id="PTHR30292:SF0">
    <property type="entry name" value="5-OXOPROLINASE SUBUNIT A"/>
    <property type="match status" value="1"/>
</dbReference>
<dbReference type="PANTHER" id="PTHR30292">
    <property type="entry name" value="UNCHARACTERIZED PROTEIN YBGL-RELATED"/>
    <property type="match status" value="1"/>
</dbReference>
<dbReference type="Pfam" id="PF03746">
    <property type="entry name" value="LamB_YcsF"/>
    <property type="match status" value="1"/>
</dbReference>
<dbReference type="SUPFAM" id="SSF88713">
    <property type="entry name" value="Glycoside hydrolase/deacetylase"/>
    <property type="match status" value="1"/>
</dbReference>
<organism>
    <name type="scientific">Bordetella pertussis (strain Tohama I / ATCC BAA-589 / NCTC 13251)</name>
    <dbReference type="NCBI Taxonomy" id="257313"/>
    <lineage>
        <taxon>Bacteria</taxon>
        <taxon>Pseudomonadati</taxon>
        <taxon>Pseudomonadota</taxon>
        <taxon>Betaproteobacteria</taxon>
        <taxon>Burkholderiales</taxon>
        <taxon>Alcaligenaceae</taxon>
        <taxon>Bordetella</taxon>
    </lineage>
</organism>
<accession>O30444</accession>
<evidence type="ECO:0000255" key="1">
    <source>
        <dbReference type="HAMAP-Rule" id="MF_00691"/>
    </source>
</evidence>
<evidence type="ECO:0000305" key="2"/>
<feature type="chain" id="PRO_0000184994" description="5-oxoprolinase subunit A">
    <location>
        <begin position="1"/>
        <end position="252"/>
    </location>
</feature>
<reference key="1">
    <citation type="journal article" date="1998" name="Gene">
        <title>Identification of Btr-regulated genes using a titration assay. Search for a role for this transcriptional regulator in the growth and virulence of Bordetella pertussis.</title>
        <authorList>
            <person name="Wood G.E."/>
            <person name="Khelef N."/>
            <person name="Guiso N."/>
            <person name="Friedman R.L."/>
        </authorList>
    </citation>
    <scope>NUCLEOTIDE SEQUENCE [GENOMIC DNA]</scope>
    <source>
        <strain>Tohama I / BP338</strain>
    </source>
</reference>
<reference key="2">
    <citation type="journal article" date="2003" name="Nat. Genet.">
        <title>Comparative analysis of the genome sequences of Bordetella pertussis, Bordetella parapertussis and Bordetella bronchiseptica.</title>
        <authorList>
            <person name="Parkhill J."/>
            <person name="Sebaihia M."/>
            <person name="Preston A."/>
            <person name="Murphy L.D."/>
            <person name="Thomson N.R."/>
            <person name="Harris D.E."/>
            <person name="Holden M.T.G."/>
            <person name="Churcher C.M."/>
            <person name="Bentley S.D."/>
            <person name="Mungall K.L."/>
            <person name="Cerdeno-Tarraga A.-M."/>
            <person name="Temple L."/>
            <person name="James K.D."/>
            <person name="Harris B."/>
            <person name="Quail M.A."/>
            <person name="Achtman M."/>
            <person name="Atkin R."/>
            <person name="Baker S."/>
            <person name="Basham D."/>
            <person name="Bason N."/>
            <person name="Cherevach I."/>
            <person name="Chillingworth T."/>
            <person name="Collins M."/>
            <person name="Cronin A."/>
            <person name="Davis P."/>
            <person name="Doggett J."/>
            <person name="Feltwell T."/>
            <person name="Goble A."/>
            <person name="Hamlin N."/>
            <person name="Hauser H."/>
            <person name="Holroyd S."/>
            <person name="Jagels K."/>
            <person name="Leather S."/>
            <person name="Moule S."/>
            <person name="Norberczak H."/>
            <person name="O'Neil S."/>
            <person name="Ormond D."/>
            <person name="Price C."/>
            <person name="Rabbinowitsch E."/>
            <person name="Rutter S."/>
            <person name="Sanders M."/>
            <person name="Saunders D."/>
            <person name="Seeger K."/>
            <person name="Sharp S."/>
            <person name="Simmonds M."/>
            <person name="Skelton J."/>
            <person name="Squares R."/>
            <person name="Squares S."/>
            <person name="Stevens K."/>
            <person name="Unwin L."/>
            <person name="Whitehead S."/>
            <person name="Barrell B.G."/>
            <person name="Maskell D.J."/>
        </authorList>
    </citation>
    <scope>NUCLEOTIDE SEQUENCE [LARGE SCALE GENOMIC DNA]</scope>
    <source>
        <strain>Tohama I / ATCC BAA-589 / NCTC 13251</strain>
    </source>
</reference>